<protein>
    <recommendedName>
        <fullName evidence="1">S-adenosylmethionine:tRNA ribosyltransferase-isomerase</fullName>
        <ecNumber evidence="1">2.4.99.17</ecNumber>
    </recommendedName>
    <alternativeName>
        <fullName evidence="1">Queuosine biosynthesis protein QueA</fullName>
    </alternativeName>
</protein>
<sequence>MLVSDFHFDLPDELIARYPTEERTASRLLHLNGETGHFEDKQFFDLLDQINEGDLLIFNNTRVIPARLYGRKASGGKLEILVERVLDEHRCLAHVRASKAPKEGAELVLGEDKLGEGNGFKAIMTARHDALFELHFNEEQPLFDLLQQAGHMPLPPYIDRPDEDADQERYQTVYSKVLGAVAAPTAGLHFDNPTLEKLKAKGVNIAFVTLHVGAGTFQPVRVDNILDHKMHAEYAEVSQAVVDQILATKATGKRVIAVGTTSVRSIESAAQAAEKEGKLITPFFSDTSIFLYPGKTFRIVDALVTNFHLPESTLIMLVSAFAGYRNTMKAYQHAVEAKYRFFSYGDAMFINKNPNALNDLP</sequence>
<feature type="chain" id="PRO_1000015170" description="S-adenosylmethionine:tRNA ribosyltransferase-isomerase">
    <location>
        <begin position="1"/>
        <end position="361"/>
    </location>
</feature>
<evidence type="ECO:0000255" key="1">
    <source>
        <dbReference type="HAMAP-Rule" id="MF_00113"/>
    </source>
</evidence>
<reference key="1">
    <citation type="journal article" date="2008" name="J. Bacteriol.">
        <title>The complete genome sequence of Actinobacillus pleuropneumoniae L20 (serotype 5b).</title>
        <authorList>
            <person name="Foote S.J."/>
            <person name="Bosse J.T."/>
            <person name="Bouevitch A.B."/>
            <person name="Langford P.R."/>
            <person name="Young N.M."/>
            <person name="Nash J.H.E."/>
        </authorList>
    </citation>
    <scope>NUCLEOTIDE SEQUENCE [LARGE SCALE GENOMIC DNA]</scope>
    <source>
        <strain>L20</strain>
    </source>
</reference>
<gene>
    <name evidence="1" type="primary">queA</name>
    <name type="ordered locus">APL_0765</name>
</gene>
<comment type="function">
    <text evidence="1">Transfers and isomerizes the ribose moiety from AdoMet to the 7-aminomethyl group of 7-deazaguanine (preQ1-tRNA) to give epoxyqueuosine (oQ-tRNA).</text>
</comment>
<comment type="catalytic activity">
    <reaction evidence="1">
        <text>7-aminomethyl-7-carbaguanosine(34) in tRNA + S-adenosyl-L-methionine = epoxyqueuosine(34) in tRNA + adenine + L-methionine + 2 H(+)</text>
        <dbReference type="Rhea" id="RHEA:32155"/>
        <dbReference type="Rhea" id="RHEA-COMP:10342"/>
        <dbReference type="Rhea" id="RHEA-COMP:18582"/>
        <dbReference type="ChEBI" id="CHEBI:15378"/>
        <dbReference type="ChEBI" id="CHEBI:16708"/>
        <dbReference type="ChEBI" id="CHEBI:57844"/>
        <dbReference type="ChEBI" id="CHEBI:59789"/>
        <dbReference type="ChEBI" id="CHEBI:82833"/>
        <dbReference type="ChEBI" id="CHEBI:194443"/>
        <dbReference type="EC" id="2.4.99.17"/>
    </reaction>
</comment>
<comment type="pathway">
    <text evidence="1">tRNA modification; tRNA-queuosine biosynthesis.</text>
</comment>
<comment type="subunit">
    <text evidence="1">Monomer.</text>
</comment>
<comment type="subcellular location">
    <subcellularLocation>
        <location evidence="1">Cytoplasm</location>
    </subcellularLocation>
</comment>
<comment type="similarity">
    <text evidence="1">Belongs to the QueA family.</text>
</comment>
<proteinExistence type="inferred from homology"/>
<accession>A3N0C7</accession>
<dbReference type="EC" id="2.4.99.17" evidence="1"/>
<dbReference type="EMBL" id="CP000569">
    <property type="protein sequence ID" value="ABN73863.1"/>
    <property type="molecule type" value="Genomic_DNA"/>
</dbReference>
<dbReference type="RefSeq" id="WP_009874882.1">
    <property type="nucleotide sequence ID" value="NC_009053.1"/>
</dbReference>
<dbReference type="SMR" id="A3N0C7"/>
<dbReference type="STRING" id="416269.APL_0765"/>
<dbReference type="EnsemblBacteria" id="ABN73863">
    <property type="protein sequence ID" value="ABN73863"/>
    <property type="gene ID" value="APL_0765"/>
</dbReference>
<dbReference type="KEGG" id="apl:APL_0765"/>
<dbReference type="PATRIC" id="fig|416269.6.peg.800"/>
<dbReference type="eggNOG" id="COG0809">
    <property type="taxonomic scope" value="Bacteria"/>
</dbReference>
<dbReference type="HOGENOM" id="CLU_039110_1_0_6"/>
<dbReference type="UniPathway" id="UPA00392"/>
<dbReference type="Proteomes" id="UP000001432">
    <property type="component" value="Chromosome"/>
</dbReference>
<dbReference type="GO" id="GO:0005737">
    <property type="term" value="C:cytoplasm"/>
    <property type="evidence" value="ECO:0007669"/>
    <property type="project" value="UniProtKB-SubCell"/>
</dbReference>
<dbReference type="GO" id="GO:0051075">
    <property type="term" value="F:S-adenosylmethionine:tRNA ribosyltransferase-isomerase activity"/>
    <property type="evidence" value="ECO:0007669"/>
    <property type="project" value="UniProtKB-EC"/>
</dbReference>
<dbReference type="GO" id="GO:0008616">
    <property type="term" value="P:queuosine biosynthetic process"/>
    <property type="evidence" value="ECO:0007669"/>
    <property type="project" value="UniProtKB-UniRule"/>
</dbReference>
<dbReference type="GO" id="GO:0002099">
    <property type="term" value="P:tRNA wobble guanine modification"/>
    <property type="evidence" value="ECO:0007669"/>
    <property type="project" value="TreeGrafter"/>
</dbReference>
<dbReference type="FunFam" id="2.40.10.240:FF:000001">
    <property type="entry name" value="S-adenosylmethionine:tRNA ribosyltransferase-isomerase"/>
    <property type="match status" value="1"/>
</dbReference>
<dbReference type="FunFam" id="3.40.1780.10:FF:000001">
    <property type="entry name" value="S-adenosylmethionine:tRNA ribosyltransferase-isomerase"/>
    <property type="match status" value="1"/>
</dbReference>
<dbReference type="Gene3D" id="2.40.10.240">
    <property type="entry name" value="QueA-like"/>
    <property type="match status" value="1"/>
</dbReference>
<dbReference type="Gene3D" id="3.40.1780.10">
    <property type="entry name" value="QueA-like"/>
    <property type="match status" value="1"/>
</dbReference>
<dbReference type="HAMAP" id="MF_00113">
    <property type="entry name" value="QueA"/>
    <property type="match status" value="1"/>
</dbReference>
<dbReference type="InterPro" id="IPR003699">
    <property type="entry name" value="QueA"/>
</dbReference>
<dbReference type="InterPro" id="IPR042118">
    <property type="entry name" value="QueA_dom1"/>
</dbReference>
<dbReference type="InterPro" id="IPR042119">
    <property type="entry name" value="QueA_dom2"/>
</dbReference>
<dbReference type="InterPro" id="IPR036100">
    <property type="entry name" value="QueA_sf"/>
</dbReference>
<dbReference type="NCBIfam" id="NF001140">
    <property type="entry name" value="PRK00147.1"/>
    <property type="match status" value="1"/>
</dbReference>
<dbReference type="NCBIfam" id="TIGR00113">
    <property type="entry name" value="queA"/>
    <property type="match status" value="1"/>
</dbReference>
<dbReference type="PANTHER" id="PTHR30307">
    <property type="entry name" value="S-ADENOSYLMETHIONINE:TRNA RIBOSYLTRANSFERASE-ISOMERASE"/>
    <property type="match status" value="1"/>
</dbReference>
<dbReference type="PANTHER" id="PTHR30307:SF0">
    <property type="entry name" value="S-ADENOSYLMETHIONINE:TRNA RIBOSYLTRANSFERASE-ISOMERASE"/>
    <property type="match status" value="1"/>
</dbReference>
<dbReference type="Pfam" id="PF02547">
    <property type="entry name" value="Queuosine_synth"/>
    <property type="match status" value="1"/>
</dbReference>
<dbReference type="SUPFAM" id="SSF111337">
    <property type="entry name" value="QueA-like"/>
    <property type="match status" value="1"/>
</dbReference>
<keyword id="KW-0963">Cytoplasm</keyword>
<keyword id="KW-0671">Queuosine biosynthesis</keyword>
<keyword id="KW-1185">Reference proteome</keyword>
<keyword id="KW-0949">S-adenosyl-L-methionine</keyword>
<keyword id="KW-0808">Transferase</keyword>
<organism>
    <name type="scientific">Actinobacillus pleuropneumoniae serotype 5b (strain L20)</name>
    <dbReference type="NCBI Taxonomy" id="416269"/>
    <lineage>
        <taxon>Bacteria</taxon>
        <taxon>Pseudomonadati</taxon>
        <taxon>Pseudomonadota</taxon>
        <taxon>Gammaproteobacteria</taxon>
        <taxon>Pasteurellales</taxon>
        <taxon>Pasteurellaceae</taxon>
        <taxon>Actinobacillus</taxon>
    </lineage>
</organism>
<name>QUEA_ACTP2</name>